<sequence length="148" mass="16487">MTLFIDGDAFPNLLKPIVLRSIERLALPTKVIANKKINIGRSSHIEYIIVDQGADEADHRIVDLCQKDDLVITADIPLADRIISKEGHAIDHRGELYSIENIKQYLAMRNLMESIRESGEMTGGPKAFGPKDAHAFANQFNAFLAKNC</sequence>
<proteinExistence type="inferred from homology"/>
<comment type="similarity">
    <text evidence="1">Belongs to the UPF0178 family.</text>
</comment>
<protein>
    <recommendedName>
        <fullName evidence="1">UPF0178 protein SUN_1096</fullName>
    </recommendedName>
</protein>
<dbReference type="EMBL" id="AP009179">
    <property type="protein sequence ID" value="BAF72051.1"/>
    <property type="molecule type" value="Genomic_DNA"/>
</dbReference>
<dbReference type="RefSeq" id="WP_011980784.1">
    <property type="nucleotide sequence ID" value="NC_009663.1"/>
</dbReference>
<dbReference type="STRING" id="387093.SUN_1096"/>
<dbReference type="KEGG" id="sun:SUN_1096"/>
<dbReference type="eggNOG" id="COG1671">
    <property type="taxonomic scope" value="Bacteria"/>
</dbReference>
<dbReference type="HOGENOM" id="CLU_106619_2_1_7"/>
<dbReference type="OrthoDB" id="9798918at2"/>
<dbReference type="Proteomes" id="UP000006378">
    <property type="component" value="Chromosome"/>
</dbReference>
<dbReference type="CDD" id="cd18720">
    <property type="entry name" value="PIN_YqxD-like"/>
    <property type="match status" value="1"/>
</dbReference>
<dbReference type="HAMAP" id="MF_00489">
    <property type="entry name" value="UPF0178"/>
    <property type="match status" value="1"/>
</dbReference>
<dbReference type="InterPro" id="IPR003791">
    <property type="entry name" value="UPF0178"/>
</dbReference>
<dbReference type="NCBIfam" id="NF001095">
    <property type="entry name" value="PRK00124.1"/>
    <property type="match status" value="1"/>
</dbReference>
<dbReference type="PANTHER" id="PTHR35146">
    <property type="entry name" value="UPF0178 PROTEIN YAII"/>
    <property type="match status" value="1"/>
</dbReference>
<dbReference type="PANTHER" id="PTHR35146:SF1">
    <property type="entry name" value="UPF0178 PROTEIN YAII"/>
    <property type="match status" value="1"/>
</dbReference>
<dbReference type="Pfam" id="PF02639">
    <property type="entry name" value="DUF188"/>
    <property type="match status" value="1"/>
</dbReference>
<reference key="1">
    <citation type="journal article" date="2007" name="Proc. Natl. Acad. Sci. U.S.A.">
        <title>Deep-sea vent epsilon-proteobacterial genomes provide insights into emergence of pathogens.</title>
        <authorList>
            <person name="Nakagawa S."/>
            <person name="Takaki Y."/>
            <person name="Shimamura S."/>
            <person name="Reysenbach A.-L."/>
            <person name="Takai K."/>
            <person name="Horikoshi K."/>
        </authorList>
    </citation>
    <scope>NUCLEOTIDE SEQUENCE [LARGE SCALE GENOMIC DNA]</scope>
    <source>
        <strain>NBC37-1</strain>
    </source>
</reference>
<feature type="chain" id="PRO_1000014451" description="UPF0178 protein SUN_1096">
    <location>
        <begin position="1"/>
        <end position="148"/>
    </location>
</feature>
<organism>
    <name type="scientific">Sulfurovum sp. (strain NBC37-1)</name>
    <dbReference type="NCBI Taxonomy" id="387093"/>
    <lineage>
        <taxon>Bacteria</taxon>
        <taxon>Pseudomonadati</taxon>
        <taxon>Campylobacterota</taxon>
        <taxon>Epsilonproteobacteria</taxon>
        <taxon>Campylobacterales</taxon>
        <taxon>Sulfurovaceae</taxon>
        <taxon>Sulfurovum</taxon>
    </lineage>
</organism>
<evidence type="ECO:0000255" key="1">
    <source>
        <dbReference type="HAMAP-Rule" id="MF_00489"/>
    </source>
</evidence>
<name>Y1096_SULNB</name>
<accession>A6Q992</accession>
<gene>
    <name type="ordered locus">SUN_1096</name>
</gene>